<feature type="initiator methionine" description="Removed" evidence="1">
    <location>
        <position position="1"/>
    </location>
</feature>
<feature type="chain" id="PRO_0000199678" description="Profilin-2">
    <location>
        <begin position="2"/>
        <end position="131"/>
    </location>
</feature>
<protein>
    <recommendedName>
        <fullName>Profilin-2</fullName>
    </recommendedName>
</protein>
<accession>P49233</accession>
<keyword id="KW-0009">Actin-binding</keyword>
<keyword id="KW-0963">Cytoplasm</keyword>
<keyword id="KW-0206">Cytoskeleton</keyword>
<keyword id="KW-1185">Reference proteome</keyword>
<sequence length="131" mass="14164">MSWQAYVDDHLCCEIDGQHLTSAAILGHDGSVWAESPNFPKFKPEEIAGIVKDFEEPGHLAPTGLFLGGTKYMVIQGEPGVVIRGKKGTGGITIKKTGMALILGIYDEPMTPGQCNLVVERLGDYLIDQGY</sequence>
<reference key="1">
    <citation type="journal article" date="1994" name="Int. Arch. Allergy Immunol.">
        <title>Polymerase chain reaction based cDNA cloning of wheat profilin: a potential plant allergen.</title>
        <authorList>
            <person name="Rihs H.-P."/>
            <person name="Rozynek P."/>
            <person name="May-Taube K."/>
            <person name="Welticke B."/>
            <person name="Baur X."/>
        </authorList>
    </citation>
    <scope>NUCLEOTIDE SEQUENCE [MRNA]</scope>
    <source>
        <strain>cv. TAM 107</strain>
    </source>
</reference>
<dbReference type="EMBL" id="X89826">
    <property type="protein sequence ID" value="CAA61944.2"/>
    <property type="molecule type" value="mRNA"/>
</dbReference>
<dbReference type="PIR" id="T06553">
    <property type="entry name" value="T06553"/>
</dbReference>
<dbReference type="SMR" id="P49233"/>
<dbReference type="STRING" id="4565.P49233"/>
<dbReference type="Allergome" id="3499">
    <property type="allergen name" value="Tri a 12.0102"/>
</dbReference>
<dbReference type="Allergome" id="767">
    <property type="allergen name" value="Tri a 12"/>
</dbReference>
<dbReference type="eggNOG" id="KOG1755">
    <property type="taxonomic scope" value="Eukaryota"/>
</dbReference>
<dbReference type="Proteomes" id="UP000019116">
    <property type="component" value="Unplaced"/>
</dbReference>
<dbReference type="ExpressionAtlas" id="P49233">
    <property type="expression patterns" value="baseline"/>
</dbReference>
<dbReference type="GO" id="GO:0005938">
    <property type="term" value="C:cell cortex"/>
    <property type="evidence" value="ECO:0000318"/>
    <property type="project" value="GO_Central"/>
</dbReference>
<dbReference type="GO" id="GO:0005856">
    <property type="term" value="C:cytoskeleton"/>
    <property type="evidence" value="ECO:0007669"/>
    <property type="project" value="UniProtKB-SubCell"/>
</dbReference>
<dbReference type="GO" id="GO:0003785">
    <property type="term" value="F:actin monomer binding"/>
    <property type="evidence" value="ECO:0000318"/>
    <property type="project" value="GO_Central"/>
</dbReference>
<dbReference type="CDD" id="cd00148">
    <property type="entry name" value="PROF"/>
    <property type="match status" value="1"/>
</dbReference>
<dbReference type="FunFam" id="3.30.450.30:FF:000001">
    <property type="entry name" value="Profilin"/>
    <property type="match status" value="1"/>
</dbReference>
<dbReference type="Gene3D" id="3.30.450.30">
    <property type="entry name" value="Dynein light chain 2a, cytoplasmic"/>
    <property type="match status" value="1"/>
</dbReference>
<dbReference type="InterPro" id="IPR048278">
    <property type="entry name" value="PFN"/>
</dbReference>
<dbReference type="InterPro" id="IPR005455">
    <property type="entry name" value="PFN_euk"/>
</dbReference>
<dbReference type="InterPro" id="IPR036140">
    <property type="entry name" value="PFN_sf"/>
</dbReference>
<dbReference type="InterPro" id="IPR027310">
    <property type="entry name" value="Profilin_CS"/>
</dbReference>
<dbReference type="PANTHER" id="PTHR11604">
    <property type="entry name" value="PROFILIN"/>
    <property type="match status" value="1"/>
</dbReference>
<dbReference type="PANTHER" id="PTHR11604:SF67">
    <property type="entry name" value="PROFILIN LP04"/>
    <property type="match status" value="1"/>
</dbReference>
<dbReference type="Pfam" id="PF00235">
    <property type="entry name" value="Profilin"/>
    <property type="match status" value="1"/>
</dbReference>
<dbReference type="PRINTS" id="PR00392">
    <property type="entry name" value="PROFILIN"/>
</dbReference>
<dbReference type="PRINTS" id="PR01640">
    <property type="entry name" value="PROFILINPLNT"/>
</dbReference>
<dbReference type="SMART" id="SM00392">
    <property type="entry name" value="PROF"/>
    <property type="match status" value="1"/>
</dbReference>
<dbReference type="SUPFAM" id="SSF55770">
    <property type="entry name" value="Profilin (actin-binding protein)"/>
    <property type="match status" value="1"/>
</dbReference>
<dbReference type="PROSITE" id="PS00414">
    <property type="entry name" value="PROFILIN"/>
    <property type="match status" value="1"/>
</dbReference>
<comment type="function">
    <text>Binds to actin and affects the structure of the cytoskeleton. At high concentrations, profilin prevents the polymerization of actin, whereas it enhances it at low concentrations. By binding to PIP2, it inhibits the formation of IP3 and DG.</text>
</comment>
<comment type="subunit">
    <text>Occurs in many kinds of cells as a complex with monomeric actin in a 1:1 ratio.</text>
</comment>
<comment type="subcellular location">
    <subcellularLocation>
        <location>Cytoplasm</location>
        <location>Cytoskeleton</location>
    </subcellularLocation>
</comment>
<comment type="similarity">
    <text evidence="2">Belongs to the profilin family.</text>
</comment>
<gene>
    <name type="primary">PRO2</name>
</gene>
<evidence type="ECO:0000250" key="1"/>
<evidence type="ECO:0000305" key="2"/>
<proteinExistence type="evidence at transcript level"/>
<name>PROF2_WHEAT</name>
<organism>
    <name type="scientific">Triticum aestivum</name>
    <name type="common">Wheat</name>
    <dbReference type="NCBI Taxonomy" id="4565"/>
    <lineage>
        <taxon>Eukaryota</taxon>
        <taxon>Viridiplantae</taxon>
        <taxon>Streptophyta</taxon>
        <taxon>Embryophyta</taxon>
        <taxon>Tracheophyta</taxon>
        <taxon>Spermatophyta</taxon>
        <taxon>Magnoliopsida</taxon>
        <taxon>Liliopsida</taxon>
        <taxon>Poales</taxon>
        <taxon>Poaceae</taxon>
        <taxon>BOP clade</taxon>
        <taxon>Pooideae</taxon>
        <taxon>Triticodae</taxon>
        <taxon>Triticeae</taxon>
        <taxon>Triticinae</taxon>
        <taxon>Triticum</taxon>
    </lineage>
</organism>